<protein>
    <recommendedName>
        <fullName evidence="1">DNA gyrase inhibitor YacG</fullName>
    </recommendedName>
</protein>
<gene>
    <name evidence="1" type="primary">yacG</name>
    <name type="ordered locus">HNE_1731</name>
</gene>
<evidence type="ECO:0000255" key="1">
    <source>
        <dbReference type="HAMAP-Rule" id="MF_00649"/>
    </source>
</evidence>
<evidence type="ECO:0000256" key="2">
    <source>
        <dbReference type="SAM" id="MobiDB-lite"/>
    </source>
</evidence>
<organism>
    <name type="scientific">Hyphomonas neptunium (strain ATCC 15444)</name>
    <dbReference type="NCBI Taxonomy" id="228405"/>
    <lineage>
        <taxon>Bacteria</taxon>
        <taxon>Pseudomonadati</taxon>
        <taxon>Pseudomonadota</taxon>
        <taxon>Alphaproteobacteria</taxon>
        <taxon>Hyphomonadales</taxon>
        <taxon>Hyphomonadaceae</taxon>
        <taxon>Hyphomonas</taxon>
    </lineage>
</organism>
<feature type="chain" id="PRO_1000056977" description="DNA gyrase inhibitor YacG">
    <location>
        <begin position="1"/>
        <end position="73"/>
    </location>
</feature>
<feature type="region of interest" description="Disordered" evidence="2">
    <location>
        <begin position="54"/>
        <end position="73"/>
    </location>
</feature>
<feature type="binding site" evidence="1">
    <location>
        <position position="14"/>
    </location>
    <ligand>
        <name>Zn(2+)</name>
        <dbReference type="ChEBI" id="CHEBI:29105"/>
    </ligand>
</feature>
<feature type="binding site" evidence="1">
    <location>
        <position position="17"/>
    </location>
    <ligand>
        <name>Zn(2+)</name>
        <dbReference type="ChEBI" id="CHEBI:29105"/>
    </ligand>
</feature>
<feature type="binding site" evidence="1">
    <location>
        <position position="30"/>
    </location>
    <ligand>
        <name>Zn(2+)</name>
        <dbReference type="ChEBI" id="CHEBI:29105"/>
    </ligand>
</feature>
<feature type="binding site" evidence="1">
    <location>
        <position position="34"/>
    </location>
    <ligand>
        <name>Zn(2+)</name>
        <dbReference type="ChEBI" id="CHEBI:29105"/>
    </ligand>
</feature>
<dbReference type="EMBL" id="CP000158">
    <property type="protein sequence ID" value="ABI78222.1"/>
    <property type="molecule type" value="Genomic_DNA"/>
</dbReference>
<dbReference type="RefSeq" id="WP_011646736.1">
    <property type="nucleotide sequence ID" value="NC_008358.1"/>
</dbReference>
<dbReference type="SMR" id="Q0C1F7"/>
<dbReference type="STRING" id="228405.HNE_1731"/>
<dbReference type="KEGG" id="hne:HNE_1731"/>
<dbReference type="eggNOG" id="COG3024">
    <property type="taxonomic scope" value="Bacteria"/>
</dbReference>
<dbReference type="HOGENOM" id="CLU_178280_2_0_5"/>
<dbReference type="Proteomes" id="UP000001959">
    <property type="component" value="Chromosome"/>
</dbReference>
<dbReference type="GO" id="GO:0008657">
    <property type="term" value="F:DNA topoisomerase type II (double strand cut, ATP-hydrolyzing) inhibitor activity"/>
    <property type="evidence" value="ECO:0007669"/>
    <property type="project" value="UniProtKB-UniRule"/>
</dbReference>
<dbReference type="GO" id="GO:0008270">
    <property type="term" value="F:zinc ion binding"/>
    <property type="evidence" value="ECO:0007669"/>
    <property type="project" value="UniProtKB-UniRule"/>
</dbReference>
<dbReference type="GO" id="GO:0006355">
    <property type="term" value="P:regulation of DNA-templated transcription"/>
    <property type="evidence" value="ECO:0007669"/>
    <property type="project" value="InterPro"/>
</dbReference>
<dbReference type="Gene3D" id="3.30.50.10">
    <property type="entry name" value="Erythroid Transcription Factor GATA-1, subunit A"/>
    <property type="match status" value="1"/>
</dbReference>
<dbReference type="HAMAP" id="MF_00649">
    <property type="entry name" value="DNA_gyrase_inhibitor_YacG"/>
    <property type="match status" value="1"/>
</dbReference>
<dbReference type="InterPro" id="IPR005584">
    <property type="entry name" value="DNA_gyrase_inhibitor_YacG"/>
</dbReference>
<dbReference type="InterPro" id="IPR013088">
    <property type="entry name" value="Znf_NHR/GATA"/>
</dbReference>
<dbReference type="PANTHER" id="PTHR36150">
    <property type="entry name" value="DNA GYRASE INHIBITOR YACG"/>
    <property type="match status" value="1"/>
</dbReference>
<dbReference type="PANTHER" id="PTHR36150:SF1">
    <property type="entry name" value="DNA GYRASE INHIBITOR YACG"/>
    <property type="match status" value="1"/>
</dbReference>
<dbReference type="Pfam" id="PF03884">
    <property type="entry name" value="YacG"/>
    <property type="match status" value="1"/>
</dbReference>
<dbReference type="SUPFAM" id="SSF57716">
    <property type="entry name" value="Glucocorticoid receptor-like (DNA-binding domain)"/>
    <property type="match status" value="1"/>
</dbReference>
<name>YACG_HYPNA</name>
<proteinExistence type="inferred from homology"/>
<sequence>MSKPVNPSQRTPLCARCRKQAVAAEYRPFCSKRCADADLGQWLKGGYVIPGAAAEQADDTAGPGAAEDDTDSH</sequence>
<comment type="function">
    <text evidence="1">Inhibits all the catalytic activities of DNA gyrase by preventing its interaction with DNA. Acts by binding directly to the C-terminal domain of GyrB, which probably disrupts DNA binding by the gyrase.</text>
</comment>
<comment type="cofactor">
    <cofactor evidence="1">
        <name>Zn(2+)</name>
        <dbReference type="ChEBI" id="CHEBI:29105"/>
    </cofactor>
    <text evidence="1">Binds 1 zinc ion.</text>
</comment>
<comment type="subunit">
    <text evidence="1">Interacts with GyrB.</text>
</comment>
<comment type="similarity">
    <text evidence="1">Belongs to the DNA gyrase inhibitor YacG family.</text>
</comment>
<reference key="1">
    <citation type="journal article" date="2006" name="J. Bacteriol.">
        <title>Comparative genomic evidence for a close relationship between the dimorphic prosthecate bacteria Hyphomonas neptunium and Caulobacter crescentus.</title>
        <authorList>
            <person name="Badger J.H."/>
            <person name="Hoover T.R."/>
            <person name="Brun Y.V."/>
            <person name="Weiner R.M."/>
            <person name="Laub M.T."/>
            <person name="Alexandre G."/>
            <person name="Mrazek J."/>
            <person name="Ren Q."/>
            <person name="Paulsen I.T."/>
            <person name="Nelson K.E."/>
            <person name="Khouri H.M."/>
            <person name="Radune D."/>
            <person name="Sosa J."/>
            <person name="Dodson R.J."/>
            <person name="Sullivan S.A."/>
            <person name="Rosovitz M.J."/>
            <person name="Madupu R."/>
            <person name="Brinkac L.M."/>
            <person name="Durkin A.S."/>
            <person name="Daugherty S.C."/>
            <person name="Kothari S.P."/>
            <person name="Giglio M.G."/>
            <person name="Zhou L."/>
            <person name="Haft D.H."/>
            <person name="Selengut J.D."/>
            <person name="Davidsen T.M."/>
            <person name="Yang Q."/>
            <person name="Zafar N."/>
            <person name="Ward N.L."/>
        </authorList>
    </citation>
    <scope>NUCLEOTIDE SEQUENCE [LARGE SCALE GENOMIC DNA]</scope>
    <source>
        <strain>ATCC 15444</strain>
    </source>
</reference>
<keyword id="KW-0479">Metal-binding</keyword>
<keyword id="KW-1185">Reference proteome</keyword>
<keyword id="KW-0862">Zinc</keyword>
<accession>Q0C1F7</accession>